<organism>
    <name type="scientific">Canis lupus familiaris</name>
    <name type="common">Dog</name>
    <name type="synonym">Canis familiaris</name>
    <dbReference type="NCBI Taxonomy" id="9615"/>
    <lineage>
        <taxon>Eukaryota</taxon>
        <taxon>Metazoa</taxon>
        <taxon>Chordata</taxon>
        <taxon>Craniata</taxon>
        <taxon>Vertebrata</taxon>
        <taxon>Euteleostomi</taxon>
        <taxon>Mammalia</taxon>
        <taxon>Eutheria</taxon>
        <taxon>Laurasiatheria</taxon>
        <taxon>Carnivora</taxon>
        <taxon>Caniformia</taxon>
        <taxon>Canidae</taxon>
        <taxon>Canis</taxon>
    </lineage>
</organism>
<comment type="function">
    <text evidence="1">May be a substrate-recognition component of a SCF-like ECS (Elongin-Cullin-SOCS-box protein) E3 ubiquitin-protein ligase complex which mediates the ubiquitination and subsequent proteasomal degradation of target proteins.</text>
</comment>
<comment type="pathway">
    <text>Protein modification; protein ubiquitination.</text>
</comment>
<comment type="domain">
    <text evidence="1">The SOCS box domain mediates the interaction with the Elongin BC complex, an adapter module in different E3 ubiquitin-protein ligase complexes.</text>
</comment>
<comment type="similarity">
    <text evidence="3">Belongs to the ankyrin SOCS box (ASB) family.</text>
</comment>
<evidence type="ECO:0000250" key="1"/>
<evidence type="ECO:0000255" key="2">
    <source>
        <dbReference type="PROSITE-ProRule" id="PRU00194"/>
    </source>
</evidence>
<evidence type="ECO:0000305" key="3"/>
<name>ASB17_CANLF</name>
<proteinExistence type="evidence at transcript level"/>
<protein>
    <recommendedName>
        <fullName>Ankyrin repeat and SOCS box protein 17</fullName>
        <shortName>ASB-17</shortName>
    </recommendedName>
</protein>
<gene>
    <name type="primary">ASB17</name>
</gene>
<sequence length="295" mass="34398">MSKSSKLCRKTSCPRSNIFCNLIDKIVKRPSLQFLGQWGYHCYEPRIYRTLAKILRYVDLDGFDILLSDYIAFVEKSGYRFELNFNLEFTEICVNTILYWVFARKGNPDFVELLLKKTKDYVQDRSCNLALIWRTFTPVYCPSPLSGITPLLYVAQTRQSNILKILLQYGILEREKNPINIVITILLYPSRVRIMVDHELVDIQEDAKTCLVLCSRVLSAISIREIETQLSLGRRPIISNWLDYIPSTRYKDPCELSHLCRITIRAQLLTNNMLPNGIFSLQIPXRLQKYLNLES</sequence>
<accession>Q8HYV8</accession>
<feature type="chain" id="PRO_0000066958" description="Ankyrin repeat and SOCS box protein 17">
    <location>
        <begin position="1"/>
        <end position="295"/>
    </location>
</feature>
<feature type="repeat" description="ANK">
    <location>
        <begin position="146"/>
        <end position="176"/>
    </location>
</feature>
<feature type="domain" description="SOCS box" evidence="2">
    <location>
        <begin position="232"/>
        <end position="295"/>
    </location>
</feature>
<keyword id="KW-0040">ANK repeat</keyword>
<keyword id="KW-1185">Reference proteome</keyword>
<keyword id="KW-0833">Ubl conjugation pathway</keyword>
<dbReference type="EMBL" id="AJ518867">
    <property type="protein sequence ID" value="CAD57679.1"/>
    <property type="molecule type" value="mRNA"/>
</dbReference>
<dbReference type="FunCoup" id="Q8HYV8">
    <property type="interactions" value="1"/>
</dbReference>
<dbReference type="STRING" id="9615.ENSCAFP00000030238"/>
<dbReference type="PaxDb" id="9612-ENSCAFP00000030238"/>
<dbReference type="eggNOG" id="ENOG502QVW2">
    <property type="taxonomic scope" value="Eukaryota"/>
</dbReference>
<dbReference type="InParanoid" id="Q8HYV8"/>
<dbReference type="OrthoDB" id="6419934at2759"/>
<dbReference type="UniPathway" id="UPA00143"/>
<dbReference type="Proteomes" id="UP000002254">
    <property type="component" value="Unplaced"/>
</dbReference>
<dbReference type="Proteomes" id="UP000694429">
    <property type="component" value="Unplaced"/>
</dbReference>
<dbReference type="Proteomes" id="UP000694542">
    <property type="component" value="Unplaced"/>
</dbReference>
<dbReference type="Proteomes" id="UP000805418">
    <property type="component" value="Unplaced"/>
</dbReference>
<dbReference type="GO" id="GO:0035556">
    <property type="term" value="P:intracellular signal transduction"/>
    <property type="evidence" value="ECO:0007669"/>
    <property type="project" value="InterPro"/>
</dbReference>
<dbReference type="GO" id="GO:0016567">
    <property type="term" value="P:protein ubiquitination"/>
    <property type="evidence" value="ECO:0007669"/>
    <property type="project" value="UniProtKB-UniPathway"/>
</dbReference>
<dbReference type="CDD" id="cd03716">
    <property type="entry name" value="SOCS_ASB_like"/>
    <property type="match status" value="1"/>
</dbReference>
<dbReference type="Gene3D" id="1.25.40.20">
    <property type="entry name" value="Ankyrin repeat-containing domain"/>
    <property type="match status" value="1"/>
</dbReference>
<dbReference type="InterPro" id="IPR036770">
    <property type="entry name" value="Ankyrin_rpt-contain_sf"/>
</dbReference>
<dbReference type="InterPro" id="IPR039147">
    <property type="entry name" value="ASB17"/>
</dbReference>
<dbReference type="InterPro" id="IPR001496">
    <property type="entry name" value="SOCS_box"/>
</dbReference>
<dbReference type="InterPro" id="IPR036036">
    <property type="entry name" value="SOCS_box-like_dom_sf"/>
</dbReference>
<dbReference type="PANTHER" id="PTHR20966">
    <property type="entry name" value="ANKYRIN REPEAT AND SOCS BOX PROTEIN 17"/>
    <property type="match status" value="1"/>
</dbReference>
<dbReference type="PANTHER" id="PTHR20966:SF2">
    <property type="entry name" value="ANKYRIN REPEAT AND SOCS BOX PROTEIN 17"/>
    <property type="match status" value="1"/>
</dbReference>
<dbReference type="Pfam" id="PF07525">
    <property type="entry name" value="SOCS_box"/>
    <property type="match status" value="1"/>
</dbReference>
<dbReference type="SMART" id="SM00969">
    <property type="entry name" value="SOCS_box"/>
    <property type="match status" value="1"/>
</dbReference>
<dbReference type="SUPFAM" id="SSF48403">
    <property type="entry name" value="Ankyrin repeat"/>
    <property type="match status" value="1"/>
</dbReference>
<dbReference type="SUPFAM" id="SSF158235">
    <property type="entry name" value="SOCS box-like"/>
    <property type="match status" value="1"/>
</dbReference>
<dbReference type="PROSITE" id="PS50225">
    <property type="entry name" value="SOCS"/>
    <property type="match status" value="1"/>
</dbReference>
<reference key="1">
    <citation type="submission" date="2002-11" db="EMBL/GenBank/DDBJ databases">
        <title>Cloning of a novel human testis specific gene ASB-17.</title>
        <authorList>
            <person name="Guo J.H."/>
            <person name="Yu L."/>
        </authorList>
    </citation>
    <scope>NUCLEOTIDE SEQUENCE [LARGE SCALE MRNA]</scope>
    <source>
        <tissue>Testis</tissue>
    </source>
</reference>